<organism>
    <name type="scientific">Ascaphus truei</name>
    <name type="common">Coastal tailed frog</name>
    <dbReference type="NCBI Taxonomy" id="8439"/>
    <lineage>
        <taxon>Eukaryota</taxon>
        <taxon>Metazoa</taxon>
        <taxon>Chordata</taxon>
        <taxon>Craniata</taxon>
        <taxon>Vertebrata</taxon>
        <taxon>Euteleostomi</taxon>
        <taxon>Amphibia</taxon>
        <taxon>Batrachia</taxon>
        <taxon>Anura</taxon>
        <taxon>Ascaphidae</taxon>
        <taxon>Ascaphus</taxon>
    </lineage>
</organism>
<evidence type="ECO:0000269" key="1">
    <source>
    </source>
</evidence>
<evidence type="ECO:0000305" key="2"/>
<accession>P0CJ32</accession>
<sequence>GFKDLLKGAAKALVKTVLF</sequence>
<dbReference type="GO" id="GO:0005576">
    <property type="term" value="C:extracellular region"/>
    <property type="evidence" value="ECO:0000314"/>
    <property type="project" value="UniProtKB"/>
</dbReference>
<dbReference type="GO" id="GO:0050829">
    <property type="term" value="P:defense response to Gram-negative bacterium"/>
    <property type="evidence" value="ECO:0000314"/>
    <property type="project" value="UniProtKB"/>
</dbReference>
<dbReference type="GO" id="GO:0050830">
    <property type="term" value="P:defense response to Gram-positive bacterium"/>
    <property type="evidence" value="ECO:0000314"/>
    <property type="project" value="UniProtKB"/>
</dbReference>
<dbReference type="GO" id="GO:0044179">
    <property type="term" value="P:hemolysis in another organism"/>
    <property type="evidence" value="ECO:0000314"/>
    <property type="project" value="UniProtKB"/>
</dbReference>
<protein>
    <recommendedName>
        <fullName>Ascaphin-8</fullName>
    </recommendedName>
</protein>
<feature type="peptide" id="PRO_0000406135" description="Ascaphin-8">
    <location>
        <begin position="1"/>
        <end position="19"/>
    </location>
</feature>
<feature type="modified residue" description="Phenylalanine amide" evidence="1">
    <location>
        <position position="19"/>
    </location>
</feature>
<reference key="1">
    <citation type="journal article" date="2004" name="Biochem. Biophys. Res. Commun.">
        <title>The ascaphins: a family of antimicrobial peptides from the skin secretions of the most primitive extant frog, Ascaphus truei.</title>
        <authorList>
            <person name="Conlon J.M."/>
            <person name="Sonnevend A."/>
            <person name="Davidson C."/>
            <person name="Smith D.D."/>
            <person name="Nielsen P.F."/>
        </authorList>
    </citation>
    <scope>PROTEIN SEQUENCE</scope>
    <scope>FUNCTION</scope>
    <scope>MASS SPECTROMETRY</scope>
    <scope>SYNTHESIS</scope>
    <scope>AMIDATION AT PHE-19</scope>
    <source>
        <tissue>Skin secretion</tissue>
    </source>
</reference>
<keyword id="KW-0027">Amidation</keyword>
<keyword id="KW-0878">Amphibian defense peptide</keyword>
<keyword id="KW-0044">Antibiotic</keyword>
<keyword id="KW-0929">Antimicrobial</keyword>
<keyword id="KW-0204">Cytolysis</keyword>
<keyword id="KW-0903">Direct protein sequencing</keyword>
<keyword id="KW-0354">Hemolysis</keyword>
<keyword id="KW-0964">Secreted</keyword>
<name>ASCA8_ASCTR</name>
<proteinExistence type="evidence at protein level"/>
<comment type="function">
    <text evidence="1">Antimicrobial peptide that shows similar potency against Gram-negative bacteria and Gram-positive bacteria. Has a high hemolytic activity.</text>
</comment>
<comment type="subcellular location">
    <subcellularLocation>
        <location>Secreted</location>
    </subcellularLocation>
</comment>
<comment type="tissue specificity">
    <text>Expressed by the skin glands.</text>
</comment>
<comment type="mass spectrometry"/>
<comment type="similarity">
    <text evidence="2">Belongs to the ascaphin family.</text>
</comment>